<comment type="function">
    <text evidence="1">Gustducin-coupled receptor implicated in the perception of bitter compounds in the oral cavity and the gastrointestinal tract. Signals through PLCB2 and the calcium-regulated cation channel TRPM5 (By similarity). In airway epithelial cells, binding of denatonium increases the intracellular calcium ion concentration and stimulates ciliary beat frequency (By similarity).</text>
</comment>
<comment type="subcellular location">
    <subcellularLocation>
        <location>Membrane</location>
        <topology>Multi-pass membrane protein</topology>
    </subcellularLocation>
    <subcellularLocation>
        <location>Cell projection</location>
        <location>Cilium membrane</location>
    </subcellularLocation>
    <text evidence="1">In airway epithelial cells, localizes to motile cilia.</text>
</comment>
<comment type="miscellaneous">
    <text>Several bitter taste receptors are expressed in a single taste receptor cell.</text>
</comment>
<comment type="similarity">
    <text evidence="3">Belongs to the G-protein coupled receptor T2R family.</text>
</comment>
<gene>
    <name type="primary">TAS2R4</name>
</gene>
<name>TA2R4_PONPY</name>
<proteinExistence type="inferred from homology"/>
<evidence type="ECO:0000250" key="1"/>
<evidence type="ECO:0000255" key="2"/>
<evidence type="ECO:0000305" key="3"/>
<accession>Q645U4</accession>
<feature type="chain" id="PRO_0000082209" description="Taste receptor type 2 member 4">
    <location>
        <begin position="1"/>
        <end position="299"/>
    </location>
</feature>
<feature type="topological domain" description="Extracellular" evidence="2">
    <location>
        <begin position="1"/>
        <end position="9"/>
    </location>
</feature>
<feature type="transmembrane region" description="Helical; Name=1" evidence="2">
    <location>
        <begin position="10"/>
        <end position="30"/>
    </location>
</feature>
<feature type="topological domain" description="Cytoplasmic" evidence="2">
    <location>
        <begin position="31"/>
        <end position="46"/>
    </location>
</feature>
<feature type="transmembrane region" description="Helical; Name=2" evidence="2">
    <location>
        <begin position="47"/>
        <end position="67"/>
    </location>
</feature>
<feature type="topological domain" description="Extracellular" evidence="2">
    <location>
        <begin position="68"/>
        <end position="81"/>
    </location>
</feature>
<feature type="transmembrane region" description="Helical; Name=3" evidence="2">
    <location>
        <begin position="82"/>
        <end position="102"/>
    </location>
</feature>
<feature type="topological domain" description="Cytoplasmic" evidence="2">
    <location>
        <begin position="103"/>
        <end position="131"/>
    </location>
</feature>
<feature type="transmembrane region" description="Helical; Name=4" evidence="2">
    <location>
        <begin position="132"/>
        <end position="152"/>
    </location>
</feature>
<feature type="topological domain" description="Extracellular" evidence="2">
    <location>
        <begin position="153"/>
        <end position="172"/>
    </location>
</feature>
<feature type="transmembrane region" description="Helical; Name=5" evidence="2">
    <location>
        <begin position="173"/>
        <end position="193"/>
    </location>
</feature>
<feature type="topological domain" description="Cytoplasmic" evidence="2">
    <location>
        <begin position="194"/>
        <end position="230"/>
    </location>
</feature>
<feature type="transmembrane region" description="Helical; Name=6" evidence="2">
    <location>
        <begin position="231"/>
        <end position="251"/>
    </location>
</feature>
<feature type="topological domain" description="Extracellular" evidence="2">
    <location>
        <begin position="252"/>
        <end position="262"/>
    </location>
</feature>
<feature type="transmembrane region" description="Helical; Name=7" evidence="2">
    <location>
        <begin position="263"/>
        <end position="283"/>
    </location>
</feature>
<feature type="topological domain" description="Cytoplasmic" evidence="2">
    <location>
        <begin position="284"/>
        <end position="299"/>
    </location>
</feature>
<feature type="glycosylation site" description="N-linked (GlcNAc...) asparagine" evidence="2">
    <location>
        <position position="164"/>
    </location>
</feature>
<feature type="glycosylation site" description="N-linked (GlcNAc...) asparagine" evidence="2">
    <location>
        <position position="165"/>
    </location>
</feature>
<reference key="1">
    <citation type="journal article" date="2005" name="Mol. Biol. Evol.">
        <title>Evolution of bitter taste receptors in humans and apes.</title>
        <authorList>
            <person name="Fischer A."/>
            <person name="Gilad Y."/>
            <person name="Man O."/>
            <person name="Paeaebo S."/>
        </authorList>
    </citation>
    <scope>NUCLEOTIDE SEQUENCE [GENOMIC DNA]</scope>
</reference>
<dbReference type="EMBL" id="AY724989">
    <property type="protein sequence ID" value="AAU21175.1"/>
    <property type="molecule type" value="Genomic_DNA"/>
</dbReference>
<dbReference type="GlyCosmos" id="Q645U4">
    <property type="glycosylation" value="2 sites, No reported glycans"/>
</dbReference>
<dbReference type="GO" id="GO:0060170">
    <property type="term" value="C:ciliary membrane"/>
    <property type="evidence" value="ECO:0007669"/>
    <property type="project" value="UniProtKB-SubCell"/>
</dbReference>
<dbReference type="GO" id="GO:0033038">
    <property type="term" value="F:bitter taste receptor activity"/>
    <property type="evidence" value="ECO:0007669"/>
    <property type="project" value="InterPro"/>
</dbReference>
<dbReference type="GO" id="GO:0004930">
    <property type="term" value="F:G protein-coupled receptor activity"/>
    <property type="evidence" value="ECO:0007669"/>
    <property type="project" value="UniProtKB-KW"/>
</dbReference>
<dbReference type="CDD" id="cd15013">
    <property type="entry name" value="7tm_TAS2R4"/>
    <property type="match status" value="1"/>
</dbReference>
<dbReference type="FunFam" id="1.20.1070.10:FF:000055">
    <property type="entry name" value="Taste receptor type 2"/>
    <property type="match status" value="1"/>
</dbReference>
<dbReference type="Gene3D" id="1.20.1070.10">
    <property type="entry name" value="Rhodopsin 7-helix transmembrane proteins"/>
    <property type="match status" value="1"/>
</dbReference>
<dbReference type="InterPro" id="IPR007960">
    <property type="entry name" value="TAS2R"/>
</dbReference>
<dbReference type="InterPro" id="IPR030055">
    <property type="entry name" value="TAS2R4"/>
</dbReference>
<dbReference type="PANTHER" id="PTHR11394">
    <property type="entry name" value="TASTE RECEPTOR TYPE 2"/>
    <property type="match status" value="1"/>
</dbReference>
<dbReference type="PANTHER" id="PTHR11394:SF55">
    <property type="entry name" value="TASTE RECEPTOR TYPE 2 MEMBER 4"/>
    <property type="match status" value="1"/>
</dbReference>
<dbReference type="Pfam" id="PF05296">
    <property type="entry name" value="TAS2R"/>
    <property type="match status" value="1"/>
</dbReference>
<dbReference type="SUPFAM" id="SSF81321">
    <property type="entry name" value="Family A G protein-coupled receptor-like"/>
    <property type="match status" value="1"/>
</dbReference>
<organism>
    <name type="scientific">Pongo pygmaeus</name>
    <name type="common">Bornean orangutan</name>
    <dbReference type="NCBI Taxonomy" id="9600"/>
    <lineage>
        <taxon>Eukaryota</taxon>
        <taxon>Metazoa</taxon>
        <taxon>Chordata</taxon>
        <taxon>Craniata</taxon>
        <taxon>Vertebrata</taxon>
        <taxon>Euteleostomi</taxon>
        <taxon>Mammalia</taxon>
        <taxon>Eutheria</taxon>
        <taxon>Euarchontoglires</taxon>
        <taxon>Primates</taxon>
        <taxon>Haplorrhini</taxon>
        <taxon>Catarrhini</taxon>
        <taxon>Hominidae</taxon>
        <taxon>Pongo</taxon>
    </lineage>
</organism>
<sequence>MLQLFYFSAIIASVILNFVGIIMNLFIMVVNCKTWVKSHRISSSDRILFSLGITRFLMLGLFLVNTIFFVSSNTERSVYLSAFFVLCFMFXDSSSLWFVTLLNILYCVKITNFQHSVFLLLKQNISPKIPRLLLACVLISAFTTCLYITLSQASPFPELVTKRNNTSFNTHEGILSLVVSLVLSSSLQFIINVTSASLLIHSLRRHIQKMQKNATGFWNPQTEAHVGAMKLMIYFLILYIPYSVATLVQYLPFYVGMDMGTKAICLIFATLYSPGHSVLIIITHPKLKTTAKKILCFKK</sequence>
<protein>
    <recommendedName>
        <fullName>Taste receptor type 2 member 4</fullName>
        <shortName>T2R4</shortName>
    </recommendedName>
</protein>
<keyword id="KW-1003">Cell membrane</keyword>
<keyword id="KW-0966">Cell projection</keyword>
<keyword id="KW-0969">Cilium</keyword>
<keyword id="KW-0297">G-protein coupled receptor</keyword>
<keyword id="KW-0325">Glycoprotein</keyword>
<keyword id="KW-0472">Membrane</keyword>
<keyword id="KW-0675">Receptor</keyword>
<keyword id="KW-0716">Sensory transduction</keyword>
<keyword id="KW-0919">Taste</keyword>
<keyword id="KW-0807">Transducer</keyword>
<keyword id="KW-0812">Transmembrane</keyword>
<keyword id="KW-1133">Transmembrane helix</keyword>